<evidence type="ECO:0000255" key="1">
    <source>
        <dbReference type="HAMAP-Rule" id="MF_00374"/>
    </source>
</evidence>
<evidence type="ECO:0000305" key="2"/>
<protein>
    <recommendedName>
        <fullName evidence="1">Large ribosomal subunit protein uL29</fullName>
    </recommendedName>
    <alternativeName>
        <fullName evidence="2">50S ribosomal protein L29</fullName>
    </alternativeName>
</protein>
<keyword id="KW-1185">Reference proteome</keyword>
<keyword id="KW-0687">Ribonucleoprotein</keyword>
<keyword id="KW-0689">Ribosomal protein</keyword>
<organism>
    <name type="scientific">Photobacterium profundum (strain SS9)</name>
    <dbReference type="NCBI Taxonomy" id="298386"/>
    <lineage>
        <taxon>Bacteria</taxon>
        <taxon>Pseudomonadati</taxon>
        <taxon>Pseudomonadota</taxon>
        <taxon>Gammaproteobacteria</taxon>
        <taxon>Vibrionales</taxon>
        <taxon>Vibrionaceae</taxon>
        <taxon>Photobacterium</taxon>
    </lineage>
</organism>
<name>RL29_PHOPR</name>
<comment type="similarity">
    <text evidence="1">Belongs to the universal ribosomal protein uL29 family.</text>
</comment>
<comment type="sequence caution" evidence="2">
    <conflict type="erroneous initiation">
        <sequence resource="EMBL-CDS" id="CAG18767"/>
    </conflict>
</comment>
<reference key="1">
    <citation type="journal article" date="2005" name="Science">
        <title>Life at depth: Photobacterium profundum genome sequence and expression analysis.</title>
        <authorList>
            <person name="Vezzi A."/>
            <person name="Campanaro S."/>
            <person name="D'Angelo M."/>
            <person name="Simonato F."/>
            <person name="Vitulo N."/>
            <person name="Lauro F.M."/>
            <person name="Cestaro A."/>
            <person name="Malacrida G."/>
            <person name="Simionati B."/>
            <person name="Cannata N."/>
            <person name="Romualdi C."/>
            <person name="Bartlett D.H."/>
            <person name="Valle G."/>
        </authorList>
    </citation>
    <scope>NUCLEOTIDE SEQUENCE [LARGE SCALE GENOMIC DNA]</scope>
    <source>
        <strain>ATCC BAA-1253 / SS9</strain>
    </source>
</reference>
<accession>Q6LVA8</accession>
<sequence>MNAVDLRAKSVEELNAELVSLLREQFNLRMQAATGQLQQTHNLKAVRRDIARVKTVLTEKAGA</sequence>
<dbReference type="EMBL" id="CR378663">
    <property type="protein sequence ID" value="CAG18767.1"/>
    <property type="status" value="ALT_INIT"/>
    <property type="molecule type" value="Genomic_DNA"/>
</dbReference>
<dbReference type="RefSeq" id="WP_006232347.1">
    <property type="nucleotide sequence ID" value="NC_006370.1"/>
</dbReference>
<dbReference type="SMR" id="Q6LVA8"/>
<dbReference type="STRING" id="298386.PBPRA0328"/>
<dbReference type="KEGG" id="ppr:PBPRA0328"/>
<dbReference type="eggNOG" id="COG0255">
    <property type="taxonomic scope" value="Bacteria"/>
</dbReference>
<dbReference type="HOGENOM" id="CLU_158491_1_2_6"/>
<dbReference type="Proteomes" id="UP000000593">
    <property type="component" value="Chromosome 1"/>
</dbReference>
<dbReference type="GO" id="GO:0022625">
    <property type="term" value="C:cytosolic large ribosomal subunit"/>
    <property type="evidence" value="ECO:0007669"/>
    <property type="project" value="TreeGrafter"/>
</dbReference>
<dbReference type="GO" id="GO:0003735">
    <property type="term" value="F:structural constituent of ribosome"/>
    <property type="evidence" value="ECO:0007669"/>
    <property type="project" value="InterPro"/>
</dbReference>
<dbReference type="GO" id="GO:0006412">
    <property type="term" value="P:translation"/>
    <property type="evidence" value="ECO:0007669"/>
    <property type="project" value="UniProtKB-UniRule"/>
</dbReference>
<dbReference type="CDD" id="cd00427">
    <property type="entry name" value="Ribosomal_L29_HIP"/>
    <property type="match status" value="1"/>
</dbReference>
<dbReference type="FunFam" id="1.10.287.310:FF:000001">
    <property type="entry name" value="50S ribosomal protein L29"/>
    <property type="match status" value="1"/>
</dbReference>
<dbReference type="Gene3D" id="6.10.140.1970">
    <property type="match status" value="1"/>
</dbReference>
<dbReference type="HAMAP" id="MF_00374">
    <property type="entry name" value="Ribosomal_uL29"/>
    <property type="match status" value="1"/>
</dbReference>
<dbReference type="InterPro" id="IPR050063">
    <property type="entry name" value="Ribosomal_protein_uL29"/>
</dbReference>
<dbReference type="InterPro" id="IPR001854">
    <property type="entry name" value="Ribosomal_uL29"/>
</dbReference>
<dbReference type="InterPro" id="IPR018254">
    <property type="entry name" value="Ribosomal_uL29_CS"/>
</dbReference>
<dbReference type="InterPro" id="IPR036049">
    <property type="entry name" value="Ribosomal_uL29_sf"/>
</dbReference>
<dbReference type="NCBIfam" id="TIGR00012">
    <property type="entry name" value="L29"/>
    <property type="match status" value="1"/>
</dbReference>
<dbReference type="PANTHER" id="PTHR10916">
    <property type="entry name" value="60S RIBOSOMAL PROTEIN L35/50S RIBOSOMAL PROTEIN L29"/>
    <property type="match status" value="1"/>
</dbReference>
<dbReference type="PANTHER" id="PTHR10916:SF0">
    <property type="entry name" value="LARGE RIBOSOMAL SUBUNIT PROTEIN UL29C"/>
    <property type="match status" value="1"/>
</dbReference>
<dbReference type="Pfam" id="PF00831">
    <property type="entry name" value="Ribosomal_L29"/>
    <property type="match status" value="1"/>
</dbReference>
<dbReference type="SUPFAM" id="SSF46561">
    <property type="entry name" value="Ribosomal protein L29 (L29p)"/>
    <property type="match status" value="1"/>
</dbReference>
<dbReference type="PROSITE" id="PS00579">
    <property type="entry name" value="RIBOSOMAL_L29"/>
    <property type="match status" value="1"/>
</dbReference>
<feature type="chain" id="PRO_0000130433" description="Large ribosomal subunit protein uL29">
    <location>
        <begin position="1"/>
        <end position="63"/>
    </location>
</feature>
<gene>
    <name evidence="1" type="primary">rpmC</name>
    <name type="ordered locus">PBPRA0328</name>
</gene>
<proteinExistence type="inferred from homology"/>